<evidence type="ECO:0000255" key="1">
    <source>
        <dbReference type="HAMAP-Rule" id="MF_00451"/>
    </source>
</evidence>
<protein>
    <recommendedName>
        <fullName evidence="1">Nucleoside diphosphate kinase</fullName>
        <shortName evidence="1">NDK</shortName>
        <shortName evidence="1">NDP kinase</shortName>
        <ecNumber evidence="1">2.7.4.6</ecNumber>
    </recommendedName>
    <alternativeName>
        <fullName evidence="1">Nucleoside-2-P kinase</fullName>
    </alternativeName>
</protein>
<proteinExistence type="inferred from homology"/>
<comment type="function">
    <text evidence="1">Major role in the synthesis of nucleoside triphosphates other than ATP. The ATP gamma phosphate is transferred to the NDP beta phosphate via a ping-pong mechanism, using a phosphorylated active-site intermediate.</text>
</comment>
<comment type="catalytic activity">
    <reaction evidence="1">
        <text>a 2'-deoxyribonucleoside 5'-diphosphate + ATP = a 2'-deoxyribonucleoside 5'-triphosphate + ADP</text>
        <dbReference type="Rhea" id="RHEA:44640"/>
        <dbReference type="ChEBI" id="CHEBI:30616"/>
        <dbReference type="ChEBI" id="CHEBI:61560"/>
        <dbReference type="ChEBI" id="CHEBI:73316"/>
        <dbReference type="ChEBI" id="CHEBI:456216"/>
        <dbReference type="EC" id="2.7.4.6"/>
    </reaction>
</comment>
<comment type="catalytic activity">
    <reaction evidence="1">
        <text>a ribonucleoside 5'-diphosphate + ATP = a ribonucleoside 5'-triphosphate + ADP</text>
        <dbReference type="Rhea" id="RHEA:18113"/>
        <dbReference type="ChEBI" id="CHEBI:30616"/>
        <dbReference type="ChEBI" id="CHEBI:57930"/>
        <dbReference type="ChEBI" id="CHEBI:61557"/>
        <dbReference type="ChEBI" id="CHEBI:456216"/>
        <dbReference type="EC" id="2.7.4.6"/>
    </reaction>
</comment>
<comment type="cofactor">
    <cofactor evidence="1">
        <name>Mg(2+)</name>
        <dbReference type="ChEBI" id="CHEBI:18420"/>
    </cofactor>
</comment>
<comment type="subunit">
    <text evidence="1">Homotetramer.</text>
</comment>
<comment type="subcellular location">
    <subcellularLocation>
        <location evidence="1">Cytoplasm</location>
    </subcellularLocation>
</comment>
<comment type="similarity">
    <text evidence="1">Belongs to the NDK family.</text>
</comment>
<organism>
    <name type="scientific">Mesorhizobium japonicum (strain LMG 29417 / CECT 9101 / MAFF 303099)</name>
    <name type="common">Mesorhizobium loti (strain MAFF 303099)</name>
    <dbReference type="NCBI Taxonomy" id="266835"/>
    <lineage>
        <taxon>Bacteria</taxon>
        <taxon>Pseudomonadati</taxon>
        <taxon>Pseudomonadota</taxon>
        <taxon>Alphaproteobacteria</taxon>
        <taxon>Hyphomicrobiales</taxon>
        <taxon>Phyllobacteriaceae</taxon>
        <taxon>Mesorhizobium</taxon>
    </lineage>
</organism>
<dbReference type="EC" id="2.7.4.6" evidence="1"/>
<dbReference type="EMBL" id="BA000012">
    <property type="protein sequence ID" value="BAB54275.1"/>
    <property type="molecule type" value="Genomic_DNA"/>
</dbReference>
<dbReference type="RefSeq" id="WP_010915217.1">
    <property type="nucleotide sequence ID" value="NC_002678.2"/>
</dbReference>
<dbReference type="SMR" id="Q984N8"/>
<dbReference type="GeneID" id="66684903"/>
<dbReference type="KEGG" id="mlo:mll7917"/>
<dbReference type="eggNOG" id="COG0105">
    <property type="taxonomic scope" value="Bacteria"/>
</dbReference>
<dbReference type="HOGENOM" id="CLU_060216_8_1_5"/>
<dbReference type="Proteomes" id="UP000000552">
    <property type="component" value="Chromosome"/>
</dbReference>
<dbReference type="GO" id="GO:0005737">
    <property type="term" value="C:cytoplasm"/>
    <property type="evidence" value="ECO:0007669"/>
    <property type="project" value="UniProtKB-SubCell"/>
</dbReference>
<dbReference type="GO" id="GO:0005524">
    <property type="term" value="F:ATP binding"/>
    <property type="evidence" value="ECO:0007669"/>
    <property type="project" value="UniProtKB-UniRule"/>
</dbReference>
<dbReference type="GO" id="GO:0046872">
    <property type="term" value="F:metal ion binding"/>
    <property type="evidence" value="ECO:0007669"/>
    <property type="project" value="UniProtKB-KW"/>
</dbReference>
<dbReference type="GO" id="GO:0004550">
    <property type="term" value="F:nucleoside diphosphate kinase activity"/>
    <property type="evidence" value="ECO:0007669"/>
    <property type="project" value="UniProtKB-UniRule"/>
</dbReference>
<dbReference type="GO" id="GO:0006241">
    <property type="term" value="P:CTP biosynthetic process"/>
    <property type="evidence" value="ECO:0007669"/>
    <property type="project" value="UniProtKB-UniRule"/>
</dbReference>
<dbReference type="GO" id="GO:0006183">
    <property type="term" value="P:GTP biosynthetic process"/>
    <property type="evidence" value="ECO:0007669"/>
    <property type="project" value="UniProtKB-UniRule"/>
</dbReference>
<dbReference type="GO" id="GO:0006228">
    <property type="term" value="P:UTP biosynthetic process"/>
    <property type="evidence" value="ECO:0007669"/>
    <property type="project" value="UniProtKB-UniRule"/>
</dbReference>
<dbReference type="CDD" id="cd04413">
    <property type="entry name" value="NDPk_I"/>
    <property type="match status" value="1"/>
</dbReference>
<dbReference type="FunFam" id="3.30.70.141:FF:000039">
    <property type="entry name" value="Nucleoside diphosphate kinase B"/>
    <property type="match status" value="1"/>
</dbReference>
<dbReference type="Gene3D" id="3.30.70.141">
    <property type="entry name" value="Nucleoside diphosphate kinase-like domain"/>
    <property type="match status" value="1"/>
</dbReference>
<dbReference type="HAMAP" id="MF_00451">
    <property type="entry name" value="NDP_kinase"/>
    <property type="match status" value="1"/>
</dbReference>
<dbReference type="InterPro" id="IPR034907">
    <property type="entry name" value="NDK-like_dom"/>
</dbReference>
<dbReference type="InterPro" id="IPR036850">
    <property type="entry name" value="NDK-like_dom_sf"/>
</dbReference>
<dbReference type="InterPro" id="IPR001564">
    <property type="entry name" value="Nucleoside_diP_kinase"/>
</dbReference>
<dbReference type="InterPro" id="IPR023005">
    <property type="entry name" value="Nucleoside_diP_kinase_AS"/>
</dbReference>
<dbReference type="NCBIfam" id="NF001908">
    <property type="entry name" value="PRK00668.1"/>
    <property type="match status" value="1"/>
</dbReference>
<dbReference type="PANTHER" id="PTHR46161">
    <property type="entry name" value="NUCLEOSIDE DIPHOSPHATE KINASE"/>
    <property type="match status" value="1"/>
</dbReference>
<dbReference type="PANTHER" id="PTHR46161:SF3">
    <property type="entry name" value="NUCLEOSIDE DIPHOSPHATE KINASE DDB_G0292928-RELATED"/>
    <property type="match status" value="1"/>
</dbReference>
<dbReference type="Pfam" id="PF00334">
    <property type="entry name" value="NDK"/>
    <property type="match status" value="1"/>
</dbReference>
<dbReference type="PRINTS" id="PR01243">
    <property type="entry name" value="NUCDPKINASE"/>
</dbReference>
<dbReference type="SMART" id="SM00562">
    <property type="entry name" value="NDK"/>
    <property type="match status" value="1"/>
</dbReference>
<dbReference type="SUPFAM" id="SSF54919">
    <property type="entry name" value="Nucleoside diphosphate kinase, NDK"/>
    <property type="match status" value="1"/>
</dbReference>
<dbReference type="PROSITE" id="PS00469">
    <property type="entry name" value="NDPK"/>
    <property type="match status" value="1"/>
</dbReference>
<dbReference type="PROSITE" id="PS51374">
    <property type="entry name" value="NDPK_LIKE"/>
    <property type="match status" value="1"/>
</dbReference>
<reference key="1">
    <citation type="journal article" date="2000" name="DNA Res.">
        <title>Complete genome structure of the nitrogen-fixing symbiotic bacterium Mesorhizobium loti.</title>
        <authorList>
            <person name="Kaneko T."/>
            <person name="Nakamura Y."/>
            <person name="Sato S."/>
            <person name="Asamizu E."/>
            <person name="Kato T."/>
            <person name="Sasamoto S."/>
            <person name="Watanabe A."/>
            <person name="Idesawa K."/>
            <person name="Ishikawa A."/>
            <person name="Kawashima K."/>
            <person name="Kimura T."/>
            <person name="Kishida Y."/>
            <person name="Kiyokawa C."/>
            <person name="Kohara M."/>
            <person name="Matsumoto M."/>
            <person name="Matsuno A."/>
            <person name="Mochizuki Y."/>
            <person name="Nakayama S."/>
            <person name="Nakazaki N."/>
            <person name="Shimpo S."/>
            <person name="Sugimoto M."/>
            <person name="Takeuchi C."/>
            <person name="Yamada M."/>
            <person name="Tabata S."/>
        </authorList>
    </citation>
    <scope>NUCLEOTIDE SEQUENCE [LARGE SCALE GENOMIC DNA]</scope>
    <source>
        <strain>LMG 29417 / CECT 9101 / MAFF 303099</strain>
    </source>
</reference>
<keyword id="KW-0067">ATP-binding</keyword>
<keyword id="KW-0963">Cytoplasm</keyword>
<keyword id="KW-0418">Kinase</keyword>
<keyword id="KW-0460">Magnesium</keyword>
<keyword id="KW-0479">Metal-binding</keyword>
<keyword id="KW-0546">Nucleotide metabolism</keyword>
<keyword id="KW-0547">Nucleotide-binding</keyword>
<keyword id="KW-0597">Phosphoprotein</keyword>
<keyword id="KW-0808">Transferase</keyword>
<sequence>MALERTFSMIKPDATRRNLTGAITKMLEDAGLRVIASRRVWMSRREAEGFYAVHKDRPFFGELVEFMSSAPTIVQVLEGENAIARNREVMGATNPANAAEGTIRKVHALSIGENSVHGSDAPETAAQEIKYWFSDTEIVG</sequence>
<name>NDK_RHILO</name>
<feature type="chain" id="PRO_0000137028" description="Nucleoside diphosphate kinase">
    <location>
        <begin position="1"/>
        <end position="140"/>
    </location>
</feature>
<feature type="active site" description="Pros-phosphohistidine intermediate" evidence="1">
    <location>
        <position position="117"/>
    </location>
</feature>
<feature type="binding site" evidence="1">
    <location>
        <position position="11"/>
    </location>
    <ligand>
        <name>ATP</name>
        <dbReference type="ChEBI" id="CHEBI:30616"/>
    </ligand>
</feature>
<feature type="binding site" evidence="1">
    <location>
        <position position="59"/>
    </location>
    <ligand>
        <name>ATP</name>
        <dbReference type="ChEBI" id="CHEBI:30616"/>
    </ligand>
</feature>
<feature type="binding site" evidence="1">
    <location>
        <position position="87"/>
    </location>
    <ligand>
        <name>ATP</name>
        <dbReference type="ChEBI" id="CHEBI:30616"/>
    </ligand>
</feature>
<feature type="binding site" evidence="1">
    <location>
        <position position="93"/>
    </location>
    <ligand>
        <name>ATP</name>
        <dbReference type="ChEBI" id="CHEBI:30616"/>
    </ligand>
</feature>
<feature type="binding site" evidence="1">
    <location>
        <position position="104"/>
    </location>
    <ligand>
        <name>ATP</name>
        <dbReference type="ChEBI" id="CHEBI:30616"/>
    </ligand>
</feature>
<feature type="binding site" evidence="1">
    <location>
        <position position="114"/>
    </location>
    <ligand>
        <name>ATP</name>
        <dbReference type="ChEBI" id="CHEBI:30616"/>
    </ligand>
</feature>
<gene>
    <name evidence="1" type="primary">ndk</name>
    <name type="ordered locus">mll7917</name>
</gene>
<accession>Q984N8</accession>